<proteinExistence type="inferred from homology"/>
<accession>B4TCA5</accession>
<sequence>MAGNTIGQLFRVTTFGESHGLALGCIVDGVPPGIPLTEADLQHDLDRRRPGTSRYTTQRREPDQVKILSGVFDGVTTGTSIGLLIENTDQRSQDYSAIKDVFRPGHADYTYEQKYGLRDYRGGGRSSARETAMRVAAGAIAKKYLAEKFGIEIRGCLTQMGDIPLEIKDWRQVELNPFFCPDADKLDALDELMRALKKEGDSIGAKVTVMASGVPAGLGEPVFDRLDADIAHALMSINAVKGVEIGEGFNVVALRGSQNRDEITAQGFQSNHAGGILGGISSGQHIVAHMALKPTSSITVPGRTINRAGEEVEMITKGRHDPCVGIRAVPIAEAMLAIVLMDHLLRHRAQNADVKTEIPRW</sequence>
<evidence type="ECO:0000255" key="1">
    <source>
        <dbReference type="HAMAP-Rule" id="MF_00300"/>
    </source>
</evidence>
<comment type="function">
    <text evidence="1">Catalyzes the anti-1,4-elimination of the C-3 phosphate and the C-6 proR hydrogen from 5-enolpyruvylshikimate-3-phosphate (EPSP) to yield chorismate, which is the branch point compound that serves as the starting substrate for the three terminal pathways of aromatic amino acid biosynthesis. This reaction introduces a second double bond into the aromatic ring system.</text>
</comment>
<comment type="catalytic activity">
    <reaction evidence="1">
        <text>5-O-(1-carboxyvinyl)-3-phosphoshikimate = chorismate + phosphate</text>
        <dbReference type="Rhea" id="RHEA:21020"/>
        <dbReference type="ChEBI" id="CHEBI:29748"/>
        <dbReference type="ChEBI" id="CHEBI:43474"/>
        <dbReference type="ChEBI" id="CHEBI:57701"/>
        <dbReference type="EC" id="4.2.3.5"/>
    </reaction>
</comment>
<comment type="cofactor">
    <cofactor evidence="1">
        <name>FMNH2</name>
        <dbReference type="ChEBI" id="CHEBI:57618"/>
    </cofactor>
    <text evidence="1">Reduced FMN (FMNH(2)).</text>
</comment>
<comment type="pathway">
    <text evidence="1">Metabolic intermediate biosynthesis; chorismate biosynthesis; chorismate from D-erythrose 4-phosphate and phosphoenolpyruvate: step 7/7.</text>
</comment>
<comment type="subunit">
    <text evidence="1">Homotetramer.</text>
</comment>
<comment type="similarity">
    <text evidence="1">Belongs to the chorismate synthase family.</text>
</comment>
<reference key="1">
    <citation type="journal article" date="2011" name="J. Bacteriol.">
        <title>Comparative genomics of 28 Salmonella enterica isolates: evidence for CRISPR-mediated adaptive sublineage evolution.</title>
        <authorList>
            <person name="Fricke W.F."/>
            <person name="Mammel M.K."/>
            <person name="McDermott P.F."/>
            <person name="Tartera C."/>
            <person name="White D.G."/>
            <person name="Leclerc J.E."/>
            <person name="Ravel J."/>
            <person name="Cebula T.A."/>
        </authorList>
    </citation>
    <scope>NUCLEOTIDE SEQUENCE [LARGE SCALE GENOMIC DNA]</scope>
    <source>
        <strain>SL476</strain>
    </source>
</reference>
<organism>
    <name type="scientific">Salmonella heidelberg (strain SL476)</name>
    <dbReference type="NCBI Taxonomy" id="454169"/>
    <lineage>
        <taxon>Bacteria</taxon>
        <taxon>Pseudomonadati</taxon>
        <taxon>Pseudomonadota</taxon>
        <taxon>Gammaproteobacteria</taxon>
        <taxon>Enterobacterales</taxon>
        <taxon>Enterobacteriaceae</taxon>
        <taxon>Salmonella</taxon>
    </lineage>
</organism>
<name>AROC_SALHS</name>
<protein>
    <recommendedName>
        <fullName evidence="1">Chorismate synthase</fullName>
        <shortName evidence="1">CS</shortName>
        <ecNumber evidence="1">4.2.3.5</ecNumber>
    </recommendedName>
    <alternativeName>
        <fullName evidence="1">5-enolpyruvylshikimate-3-phosphate phospholyase</fullName>
    </alternativeName>
</protein>
<dbReference type="EC" id="4.2.3.5" evidence="1"/>
<dbReference type="EMBL" id="CP001120">
    <property type="protein sequence ID" value="ACF68695.1"/>
    <property type="molecule type" value="Genomic_DNA"/>
</dbReference>
<dbReference type="RefSeq" id="WP_000918456.1">
    <property type="nucleotide sequence ID" value="NC_011083.1"/>
</dbReference>
<dbReference type="SMR" id="B4TCA5"/>
<dbReference type="KEGG" id="seh:SeHA_C2626"/>
<dbReference type="HOGENOM" id="CLU_034547_0_2_6"/>
<dbReference type="UniPathway" id="UPA00053">
    <property type="reaction ID" value="UER00090"/>
</dbReference>
<dbReference type="Proteomes" id="UP000001866">
    <property type="component" value="Chromosome"/>
</dbReference>
<dbReference type="GO" id="GO:0005829">
    <property type="term" value="C:cytosol"/>
    <property type="evidence" value="ECO:0007669"/>
    <property type="project" value="TreeGrafter"/>
</dbReference>
<dbReference type="GO" id="GO:0004107">
    <property type="term" value="F:chorismate synthase activity"/>
    <property type="evidence" value="ECO:0007669"/>
    <property type="project" value="UniProtKB-UniRule"/>
</dbReference>
<dbReference type="GO" id="GO:0010181">
    <property type="term" value="F:FMN binding"/>
    <property type="evidence" value="ECO:0007669"/>
    <property type="project" value="TreeGrafter"/>
</dbReference>
<dbReference type="GO" id="GO:0008652">
    <property type="term" value="P:amino acid biosynthetic process"/>
    <property type="evidence" value="ECO:0007669"/>
    <property type="project" value="UniProtKB-KW"/>
</dbReference>
<dbReference type="GO" id="GO:0009073">
    <property type="term" value="P:aromatic amino acid family biosynthetic process"/>
    <property type="evidence" value="ECO:0007669"/>
    <property type="project" value="UniProtKB-KW"/>
</dbReference>
<dbReference type="GO" id="GO:0009423">
    <property type="term" value="P:chorismate biosynthetic process"/>
    <property type="evidence" value="ECO:0007669"/>
    <property type="project" value="UniProtKB-UniRule"/>
</dbReference>
<dbReference type="CDD" id="cd07304">
    <property type="entry name" value="Chorismate_synthase"/>
    <property type="match status" value="1"/>
</dbReference>
<dbReference type="FunFam" id="3.60.150.10:FF:000001">
    <property type="entry name" value="Chorismate synthase"/>
    <property type="match status" value="1"/>
</dbReference>
<dbReference type="Gene3D" id="3.60.150.10">
    <property type="entry name" value="Chorismate synthase AroC"/>
    <property type="match status" value="1"/>
</dbReference>
<dbReference type="HAMAP" id="MF_00300">
    <property type="entry name" value="Chorismate_synth"/>
    <property type="match status" value="1"/>
</dbReference>
<dbReference type="InterPro" id="IPR000453">
    <property type="entry name" value="Chorismate_synth"/>
</dbReference>
<dbReference type="InterPro" id="IPR035904">
    <property type="entry name" value="Chorismate_synth_AroC_sf"/>
</dbReference>
<dbReference type="InterPro" id="IPR020541">
    <property type="entry name" value="Chorismate_synthase_CS"/>
</dbReference>
<dbReference type="NCBIfam" id="TIGR00033">
    <property type="entry name" value="aroC"/>
    <property type="match status" value="1"/>
</dbReference>
<dbReference type="NCBIfam" id="NF003793">
    <property type="entry name" value="PRK05382.1"/>
    <property type="match status" value="1"/>
</dbReference>
<dbReference type="PANTHER" id="PTHR21085">
    <property type="entry name" value="CHORISMATE SYNTHASE"/>
    <property type="match status" value="1"/>
</dbReference>
<dbReference type="PANTHER" id="PTHR21085:SF0">
    <property type="entry name" value="CHORISMATE SYNTHASE"/>
    <property type="match status" value="1"/>
</dbReference>
<dbReference type="Pfam" id="PF01264">
    <property type="entry name" value="Chorismate_synt"/>
    <property type="match status" value="1"/>
</dbReference>
<dbReference type="PIRSF" id="PIRSF001456">
    <property type="entry name" value="Chorismate_synth"/>
    <property type="match status" value="1"/>
</dbReference>
<dbReference type="SUPFAM" id="SSF103263">
    <property type="entry name" value="Chorismate synthase, AroC"/>
    <property type="match status" value="1"/>
</dbReference>
<dbReference type="PROSITE" id="PS00787">
    <property type="entry name" value="CHORISMATE_SYNTHASE_1"/>
    <property type="match status" value="1"/>
</dbReference>
<dbReference type="PROSITE" id="PS00788">
    <property type="entry name" value="CHORISMATE_SYNTHASE_2"/>
    <property type="match status" value="1"/>
</dbReference>
<dbReference type="PROSITE" id="PS00789">
    <property type="entry name" value="CHORISMATE_SYNTHASE_3"/>
    <property type="match status" value="1"/>
</dbReference>
<feature type="chain" id="PRO_1000115395" description="Chorismate synthase">
    <location>
        <begin position="1"/>
        <end position="361"/>
    </location>
</feature>
<feature type="binding site" evidence="1">
    <location>
        <position position="48"/>
    </location>
    <ligand>
        <name>NADP(+)</name>
        <dbReference type="ChEBI" id="CHEBI:58349"/>
    </ligand>
</feature>
<feature type="binding site" evidence="1">
    <location>
        <position position="54"/>
    </location>
    <ligand>
        <name>NADP(+)</name>
        <dbReference type="ChEBI" id="CHEBI:58349"/>
    </ligand>
</feature>
<feature type="binding site" evidence="1">
    <location>
        <begin position="125"/>
        <end position="127"/>
    </location>
    <ligand>
        <name>FMN</name>
        <dbReference type="ChEBI" id="CHEBI:58210"/>
    </ligand>
</feature>
<feature type="binding site" evidence="1">
    <location>
        <begin position="238"/>
        <end position="239"/>
    </location>
    <ligand>
        <name>FMN</name>
        <dbReference type="ChEBI" id="CHEBI:58210"/>
    </ligand>
</feature>
<feature type="binding site" evidence="1">
    <location>
        <position position="278"/>
    </location>
    <ligand>
        <name>FMN</name>
        <dbReference type="ChEBI" id="CHEBI:58210"/>
    </ligand>
</feature>
<feature type="binding site" evidence="1">
    <location>
        <begin position="293"/>
        <end position="297"/>
    </location>
    <ligand>
        <name>FMN</name>
        <dbReference type="ChEBI" id="CHEBI:58210"/>
    </ligand>
</feature>
<feature type="binding site" evidence="1">
    <location>
        <position position="319"/>
    </location>
    <ligand>
        <name>FMN</name>
        <dbReference type="ChEBI" id="CHEBI:58210"/>
    </ligand>
</feature>
<keyword id="KW-0028">Amino-acid biosynthesis</keyword>
<keyword id="KW-0057">Aromatic amino acid biosynthesis</keyword>
<keyword id="KW-0274">FAD</keyword>
<keyword id="KW-0285">Flavoprotein</keyword>
<keyword id="KW-0288">FMN</keyword>
<keyword id="KW-0456">Lyase</keyword>
<keyword id="KW-0521">NADP</keyword>
<gene>
    <name evidence="1" type="primary">aroC</name>
    <name type="ordered locus">SeHA_C2626</name>
</gene>